<gene>
    <name type="primary">MBP</name>
</gene>
<dbReference type="PIR" id="A61640">
    <property type="entry name" value="MBPGB"/>
</dbReference>
<dbReference type="SMR" id="P81558"/>
<dbReference type="FunCoup" id="P81558">
    <property type="interactions" value="62"/>
</dbReference>
<dbReference type="STRING" id="9823.ENSSSCP00000061386"/>
<dbReference type="iPTMnet" id="P81558"/>
<dbReference type="PaxDb" id="9823-ENSSSCP00000025444"/>
<dbReference type="PeptideAtlas" id="P81558"/>
<dbReference type="eggNOG" id="ENOG502S4SJ">
    <property type="taxonomic scope" value="Eukaryota"/>
</dbReference>
<dbReference type="InParanoid" id="P81558"/>
<dbReference type="Proteomes" id="UP000008227">
    <property type="component" value="Unplaced"/>
</dbReference>
<dbReference type="Proteomes" id="UP000314985">
    <property type="component" value="Unplaced"/>
</dbReference>
<dbReference type="Proteomes" id="UP000694570">
    <property type="component" value="Unplaced"/>
</dbReference>
<dbReference type="Proteomes" id="UP000694571">
    <property type="component" value="Unplaced"/>
</dbReference>
<dbReference type="Proteomes" id="UP000694720">
    <property type="component" value="Unplaced"/>
</dbReference>
<dbReference type="Proteomes" id="UP000694722">
    <property type="component" value="Unplaced"/>
</dbReference>
<dbReference type="Proteomes" id="UP000694723">
    <property type="component" value="Unplaced"/>
</dbReference>
<dbReference type="Proteomes" id="UP000694724">
    <property type="component" value="Unplaced"/>
</dbReference>
<dbReference type="Proteomes" id="UP000694725">
    <property type="component" value="Unplaced"/>
</dbReference>
<dbReference type="Proteomes" id="UP000694726">
    <property type="component" value="Unplaced"/>
</dbReference>
<dbReference type="Proteomes" id="UP000694727">
    <property type="component" value="Unplaced"/>
</dbReference>
<dbReference type="Proteomes" id="UP000694728">
    <property type="component" value="Unplaced"/>
</dbReference>
<dbReference type="GO" id="GO:0071944">
    <property type="term" value="C:cell periphery"/>
    <property type="evidence" value="ECO:0000318"/>
    <property type="project" value="GO_Central"/>
</dbReference>
<dbReference type="GO" id="GO:0043218">
    <property type="term" value="C:compact myelin"/>
    <property type="evidence" value="ECO:0000318"/>
    <property type="project" value="GO_Central"/>
</dbReference>
<dbReference type="GO" id="GO:0033269">
    <property type="term" value="C:internode region of axon"/>
    <property type="evidence" value="ECO:0000318"/>
    <property type="project" value="GO_Central"/>
</dbReference>
<dbReference type="GO" id="GO:0043025">
    <property type="term" value="C:neuronal cell body"/>
    <property type="evidence" value="ECO:0000318"/>
    <property type="project" value="GO_Central"/>
</dbReference>
<dbReference type="GO" id="GO:0005886">
    <property type="term" value="C:plasma membrane"/>
    <property type="evidence" value="ECO:0007669"/>
    <property type="project" value="UniProtKB-KW"/>
</dbReference>
<dbReference type="GO" id="GO:0032991">
    <property type="term" value="C:protein-containing complex"/>
    <property type="evidence" value="ECO:0000314"/>
    <property type="project" value="CAFA"/>
</dbReference>
<dbReference type="GO" id="GO:0005516">
    <property type="term" value="F:calmodulin binding"/>
    <property type="evidence" value="ECO:0000353"/>
    <property type="project" value="CAFA"/>
</dbReference>
<dbReference type="GO" id="GO:0019911">
    <property type="term" value="F:structural constituent of myelin sheath"/>
    <property type="evidence" value="ECO:0007669"/>
    <property type="project" value="InterPro"/>
</dbReference>
<dbReference type="GO" id="GO:0042552">
    <property type="term" value="P:myelination"/>
    <property type="evidence" value="ECO:0000318"/>
    <property type="project" value="GO_Central"/>
</dbReference>
<dbReference type="DisProt" id="DP00663"/>
<dbReference type="InterPro" id="IPR000548">
    <property type="entry name" value="Myelin_BP"/>
</dbReference>
<dbReference type="PANTHER" id="PTHR11429">
    <property type="entry name" value="MYELIN BASIC PROTEIN"/>
    <property type="match status" value="1"/>
</dbReference>
<dbReference type="PANTHER" id="PTHR11429:SF0">
    <property type="entry name" value="MYELIN BASIC PROTEIN"/>
    <property type="match status" value="1"/>
</dbReference>
<dbReference type="Pfam" id="PF01669">
    <property type="entry name" value="Myelin_MBP"/>
    <property type="match status" value="1"/>
</dbReference>
<dbReference type="PRINTS" id="PR00212">
    <property type="entry name" value="MYELINMBP"/>
</dbReference>
<dbReference type="PROSITE" id="PS00569">
    <property type="entry name" value="MYELIN_MBP"/>
    <property type="match status" value="1"/>
</dbReference>
<sequence length="171" mass="18487">ASQKRPSQRHGSKYLASASTMDHARHGFLPRHRDTGIDSLGRFFGADRGAPKRGSGKDGHHAARTTHYGSLPQKAQHGRPQDENPVVHFFKNIVTPRTPPPSQGKGRGLSLSRFSWGAEGQKPGFGYGGRAPDYKPAHKGLKGAQDAQGTLSKIFKLGGRDSRSGSPMARR</sequence>
<organism>
    <name type="scientific">Sus scrofa</name>
    <name type="common">Pig</name>
    <dbReference type="NCBI Taxonomy" id="9823"/>
    <lineage>
        <taxon>Eukaryota</taxon>
        <taxon>Metazoa</taxon>
        <taxon>Chordata</taxon>
        <taxon>Craniata</taxon>
        <taxon>Vertebrata</taxon>
        <taxon>Euteleostomi</taxon>
        <taxon>Mammalia</taxon>
        <taxon>Eutheria</taxon>
        <taxon>Laurasiatheria</taxon>
        <taxon>Artiodactyla</taxon>
        <taxon>Suina</taxon>
        <taxon>Suidae</taxon>
        <taxon>Sus</taxon>
    </lineage>
</organism>
<name>MBP_PIG</name>
<proteinExistence type="evidence at protein level"/>
<keyword id="KW-0007">Acetylation</keyword>
<keyword id="KW-1003">Cell membrane</keyword>
<keyword id="KW-0164">Citrullination</keyword>
<keyword id="KW-0903">Direct protein sequencing</keyword>
<keyword id="KW-0472">Membrane</keyword>
<keyword id="KW-0488">Methylation</keyword>
<keyword id="KW-0597">Phosphoprotein</keyword>
<keyword id="KW-1185">Reference proteome</keyword>
<feature type="chain" id="PRO_0000158993" description="Myelin basic protein">
    <location>
        <begin position="1"/>
        <end position="171"/>
    </location>
</feature>
<feature type="region of interest" description="Disordered" evidence="7">
    <location>
        <begin position="1"/>
        <end position="171"/>
    </location>
</feature>
<feature type="compositionally biased region" description="Basic residues" evidence="7">
    <location>
        <begin position="1"/>
        <end position="12"/>
    </location>
</feature>
<feature type="site" description="Cleavage; by CTSG" evidence="2">
    <location>
        <begin position="90"/>
        <end position="91"/>
    </location>
</feature>
<feature type="site" description="Cleavage; by CTSG" evidence="2">
    <location>
        <begin position="114"/>
        <end position="115"/>
    </location>
</feature>
<feature type="modified residue" description="N-acetylalanine" evidence="3">
    <location>
        <position position="1"/>
    </location>
</feature>
<feature type="modified residue" description="Phosphoserine" evidence="3">
    <location>
        <position position="7"/>
    </location>
</feature>
<feature type="modified residue" description="Phosphoserine" evidence="5">
    <location>
        <position position="12"/>
    </location>
</feature>
<feature type="modified residue" description="Phosphotyrosine" evidence="4">
    <location>
        <position position="14"/>
    </location>
</feature>
<feature type="modified residue" description="Phosphoserine" evidence="5">
    <location>
        <position position="19"/>
    </location>
</feature>
<feature type="modified residue" description="Phosphothreonine" evidence="4">
    <location>
        <position position="20"/>
    </location>
</feature>
<feature type="modified residue" description="Citrulline" evidence="1">
    <location>
        <position position="25"/>
    </location>
</feature>
<feature type="modified residue" description="Citrulline" evidence="1">
    <location>
        <position position="31"/>
    </location>
</feature>
<feature type="modified residue" description="Phosphothreonine" evidence="5">
    <location>
        <position position="35"/>
    </location>
</feature>
<feature type="modified residue" description="Phosphoserine" evidence="5">
    <location>
        <position position="39"/>
    </location>
</feature>
<feature type="modified residue" description="Omega-N-methylarginine" evidence="5">
    <location>
        <position position="42"/>
    </location>
</feature>
<feature type="modified residue" description="Omega-N-methylarginine" evidence="5">
    <location>
        <position position="48"/>
    </location>
</feature>
<feature type="modified residue" description="Phosphoserine" evidence="3">
    <location>
        <position position="55"/>
    </location>
</feature>
<feature type="modified residue" description="Phosphothreonine" evidence="5">
    <location>
        <position position="66"/>
    </location>
</feature>
<feature type="modified residue" description="Phosphotyrosine" evidence="5">
    <location>
        <position position="68"/>
    </location>
</feature>
<feature type="modified residue" description="Phosphothreonine" evidence="4">
    <location>
        <position position="95"/>
    </location>
</feature>
<feature type="modified residue" description="Phosphothreonine" evidence="3">
    <location>
        <position position="98"/>
    </location>
</feature>
<feature type="modified residue" description="Deamidated glutamine" evidence="1">
    <location>
        <position position="103"/>
    </location>
</feature>
<feature type="modified residue" description="Omega-N-methylarginine; alternate" evidence="8">
    <location>
        <position position="107"/>
    </location>
</feature>
<feature type="modified residue" description="Symmetric dimethylarginine; alternate" evidence="8">
    <location>
        <position position="107"/>
    </location>
</feature>
<feature type="modified residue" description="Phosphoserine" evidence="6">
    <location>
        <position position="115"/>
    </location>
</feature>
<feature type="modified residue" description="N6-acetyllysine" evidence="3">
    <location>
        <position position="122"/>
    </location>
</feature>
<feature type="modified residue" description="Citrulline" evidence="1">
    <location>
        <position position="130"/>
    </location>
</feature>
<feature type="modified residue" description="Deamidated glutamine" evidence="1">
    <location>
        <position position="148"/>
    </location>
</feature>
<feature type="modified residue" description="Citrulline" evidence="1">
    <location>
        <position position="160"/>
    </location>
</feature>
<feature type="modified residue" description="Phosphoserine" evidence="3">
    <location>
        <position position="162"/>
    </location>
</feature>
<feature type="modified residue" description="Phosphoserine; by UHMK1" evidence="3">
    <location>
        <position position="166"/>
    </location>
</feature>
<feature type="modified residue" description="Citrulline" evidence="1">
    <location>
        <position position="171"/>
    </location>
</feature>
<reference key="1">
    <citation type="journal article" date="1985" name="J. Neurochem.">
        <title>Amino acid sequence of porcine myelin basic protein.</title>
        <authorList>
            <person name="Kira J."/>
            <person name="Deibler G.E."/>
            <person name="Krutzsch H.C."/>
            <person name="Martenson R.E."/>
        </authorList>
    </citation>
    <scope>PROTEIN SEQUENCE</scope>
    <scope>METHYLATION AT ARG-107</scope>
    <source>
        <tissue>Brain</tissue>
    </source>
</reference>
<reference key="2">
    <citation type="journal article" date="1985" name="J. Neurochem.">
        <authorList>
            <person name="Kira J."/>
            <person name="Deibler G.E."/>
            <person name="Krutzsch H.C."/>
            <person name="Martenson R.E."/>
        </authorList>
    </citation>
    <scope>ERRATUM OF PUBMED:2578056</scope>
</reference>
<evidence type="ECO:0000250" key="1"/>
<evidence type="ECO:0000250" key="2">
    <source>
        <dbReference type="UniProtKB" id="P02686"/>
    </source>
</evidence>
<evidence type="ECO:0000250" key="3">
    <source>
        <dbReference type="UniProtKB" id="P02687"/>
    </source>
</evidence>
<evidence type="ECO:0000250" key="4">
    <source>
        <dbReference type="UniProtKB" id="P02688"/>
    </source>
</evidence>
<evidence type="ECO:0000250" key="5">
    <source>
        <dbReference type="UniProtKB" id="P04370"/>
    </source>
</evidence>
<evidence type="ECO:0000250" key="6">
    <source>
        <dbReference type="UniProtKB" id="P25274"/>
    </source>
</evidence>
<evidence type="ECO:0000256" key="7">
    <source>
        <dbReference type="SAM" id="MobiDB-lite"/>
    </source>
</evidence>
<evidence type="ECO:0000269" key="8">
    <source>
    </source>
</evidence>
<evidence type="ECO:0000305" key="9"/>
<comment type="function">
    <text evidence="1">Is, with PLP, the most abundant protein component of the myelin membrane in the CNS. Has a role in both the formation and stabilization of this compact multilayer arrangement of bilayers. Each splice variant and charge isomer may have a specialized function in the assembly of an optimized, biochemically functional myelin membrane (By similarity).</text>
</comment>
<comment type="subunit">
    <text evidence="1">Homodimer.</text>
</comment>
<comment type="subcellular location">
    <subcellularLocation>
        <location>Myelin membrane</location>
        <topology>Peripheral membrane protein</topology>
        <orientation>Cytoplasmic side</orientation>
    </subcellularLocation>
    <text>Cytoplasmic side of myelin.</text>
</comment>
<comment type="PTM">
    <text evidence="8">As in other animals, several charge isomers may be produced as a result of optional post-translational modifications, such as phosphorylation of serine or threonine residues, deamidation of glutamine or asparagine residues, citrullination and methylation of arginine residues.</text>
</comment>
<comment type="PTM">
    <text evidence="1">Phosphorylated by TAOK2, VRK2, MAPK11, MAPK12, MAPK14 and MINK1.</text>
</comment>
<comment type="PTM">
    <text evidence="2">Proteolytically cleaved in B cell lysosomes by cathepsin CTSG which degrades the major immunogenic MBP epitope and prevents the activation of MBP-specific autoreactive T cells.</text>
</comment>
<comment type="similarity">
    <text evidence="9">Belongs to the myelin basic protein family.</text>
</comment>
<accession>P81558</accession>
<accession>P98189</accession>
<protein>
    <recommendedName>
        <fullName>Myelin basic protein</fullName>
        <shortName>MBP</shortName>
    </recommendedName>
</protein>